<dbReference type="EC" id="4.1.1.19" evidence="1"/>
<dbReference type="EMBL" id="AE017180">
    <property type="protein sequence ID" value="AAR35910.1"/>
    <property type="molecule type" value="Genomic_DNA"/>
</dbReference>
<dbReference type="RefSeq" id="NP_953583.1">
    <property type="nucleotide sequence ID" value="NC_002939.5"/>
</dbReference>
<dbReference type="RefSeq" id="WP_010943173.1">
    <property type="nucleotide sequence ID" value="NC_002939.5"/>
</dbReference>
<dbReference type="SMR" id="A0A4W3"/>
<dbReference type="FunCoup" id="A0A4W3">
    <property type="interactions" value="133"/>
</dbReference>
<dbReference type="STRING" id="243231.GSU2537"/>
<dbReference type="EnsemblBacteria" id="AAR35910">
    <property type="protein sequence ID" value="AAR35910"/>
    <property type="gene ID" value="GSU2537"/>
</dbReference>
<dbReference type="KEGG" id="gsu:GSU2537"/>
<dbReference type="PATRIC" id="fig|243231.5.peg.2566"/>
<dbReference type="eggNOG" id="COG1166">
    <property type="taxonomic scope" value="Bacteria"/>
</dbReference>
<dbReference type="HOGENOM" id="CLU_027243_1_0_7"/>
<dbReference type="InParanoid" id="A0A4W3"/>
<dbReference type="OrthoDB" id="9802658at2"/>
<dbReference type="UniPathway" id="UPA00186">
    <property type="reaction ID" value="UER00284"/>
</dbReference>
<dbReference type="Proteomes" id="UP000000577">
    <property type="component" value="Chromosome"/>
</dbReference>
<dbReference type="GO" id="GO:0008792">
    <property type="term" value="F:arginine decarboxylase activity"/>
    <property type="evidence" value="ECO:0000318"/>
    <property type="project" value="GO_Central"/>
</dbReference>
<dbReference type="GO" id="GO:0046872">
    <property type="term" value="F:metal ion binding"/>
    <property type="evidence" value="ECO:0007669"/>
    <property type="project" value="UniProtKB-KW"/>
</dbReference>
<dbReference type="GO" id="GO:0006527">
    <property type="term" value="P:arginine catabolic process"/>
    <property type="evidence" value="ECO:0007669"/>
    <property type="project" value="InterPro"/>
</dbReference>
<dbReference type="GO" id="GO:0033388">
    <property type="term" value="P:putrescine biosynthetic process from arginine"/>
    <property type="evidence" value="ECO:0000318"/>
    <property type="project" value="GO_Central"/>
</dbReference>
<dbReference type="GO" id="GO:0008295">
    <property type="term" value="P:spermidine biosynthetic process"/>
    <property type="evidence" value="ECO:0007669"/>
    <property type="project" value="UniProtKB-UniRule"/>
</dbReference>
<dbReference type="CDD" id="cd06830">
    <property type="entry name" value="PLPDE_III_ADC"/>
    <property type="match status" value="1"/>
</dbReference>
<dbReference type="FunFam" id="1.20.58.930:FF:000002">
    <property type="entry name" value="Biosynthetic arginine decarboxylase"/>
    <property type="match status" value="1"/>
</dbReference>
<dbReference type="Gene3D" id="1.10.287.3440">
    <property type="match status" value="1"/>
</dbReference>
<dbReference type="Gene3D" id="1.20.58.930">
    <property type="match status" value="1"/>
</dbReference>
<dbReference type="Gene3D" id="3.20.20.10">
    <property type="entry name" value="Alanine racemase"/>
    <property type="match status" value="1"/>
</dbReference>
<dbReference type="Gene3D" id="2.40.37.10">
    <property type="entry name" value="Lyase, Ornithine Decarboxylase, Chain A, domain 1"/>
    <property type="match status" value="1"/>
</dbReference>
<dbReference type="HAMAP" id="MF_01417">
    <property type="entry name" value="SpeA"/>
    <property type="match status" value="1"/>
</dbReference>
<dbReference type="InterPro" id="IPR009006">
    <property type="entry name" value="Ala_racemase/Decarboxylase_C"/>
</dbReference>
<dbReference type="InterPro" id="IPR040634">
    <property type="entry name" value="Arg_decarb_HB"/>
</dbReference>
<dbReference type="InterPro" id="IPR041128">
    <property type="entry name" value="Arg_decarbox_C"/>
</dbReference>
<dbReference type="InterPro" id="IPR002985">
    <property type="entry name" value="Arg_decrbxlase"/>
</dbReference>
<dbReference type="InterPro" id="IPR022657">
    <property type="entry name" value="De-COase2_CS"/>
</dbReference>
<dbReference type="InterPro" id="IPR022644">
    <property type="entry name" value="De-COase2_N"/>
</dbReference>
<dbReference type="InterPro" id="IPR022653">
    <property type="entry name" value="De-COase2_pyr-phos_BS"/>
</dbReference>
<dbReference type="InterPro" id="IPR000183">
    <property type="entry name" value="Orn/DAP/Arg_de-COase"/>
</dbReference>
<dbReference type="InterPro" id="IPR029066">
    <property type="entry name" value="PLP-binding_barrel"/>
</dbReference>
<dbReference type="NCBIfam" id="NF003763">
    <property type="entry name" value="PRK05354.1"/>
    <property type="match status" value="1"/>
</dbReference>
<dbReference type="NCBIfam" id="TIGR01273">
    <property type="entry name" value="speA"/>
    <property type="match status" value="1"/>
</dbReference>
<dbReference type="PANTHER" id="PTHR43295">
    <property type="entry name" value="ARGININE DECARBOXYLASE"/>
    <property type="match status" value="1"/>
</dbReference>
<dbReference type="PANTHER" id="PTHR43295:SF9">
    <property type="entry name" value="BIOSYNTHETIC ARGININE DECARBOXYLASE"/>
    <property type="match status" value="1"/>
</dbReference>
<dbReference type="Pfam" id="PF17810">
    <property type="entry name" value="Arg_decarb_HB"/>
    <property type="match status" value="1"/>
</dbReference>
<dbReference type="Pfam" id="PF17944">
    <property type="entry name" value="Arg_decarbox_C"/>
    <property type="match status" value="1"/>
</dbReference>
<dbReference type="Pfam" id="PF02784">
    <property type="entry name" value="Orn_Arg_deC_N"/>
    <property type="match status" value="1"/>
</dbReference>
<dbReference type="PIRSF" id="PIRSF001336">
    <property type="entry name" value="Arg_decrbxlase"/>
    <property type="match status" value="1"/>
</dbReference>
<dbReference type="PRINTS" id="PR01180">
    <property type="entry name" value="ARGDCRBXLASE"/>
</dbReference>
<dbReference type="PRINTS" id="PR01179">
    <property type="entry name" value="ODADCRBXLASE"/>
</dbReference>
<dbReference type="SUPFAM" id="SSF50621">
    <property type="entry name" value="Alanine racemase C-terminal domain-like"/>
    <property type="match status" value="1"/>
</dbReference>
<dbReference type="SUPFAM" id="SSF51419">
    <property type="entry name" value="PLP-binding barrel"/>
    <property type="match status" value="1"/>
</dbReference>
<dbReference type="PROSITE" id="PS00878">
    <property type="entry name" value="ODR_DC_2_1"/>
    <property type="match status" value="1"/>
</dbReference>
<dbReference type="PROSITE" id="PS00879">
    <property type="entry name" value="ODR_DC_2_2"/>
    <property type="match status" value="1"/>
</dbReference>
<organism>
    <name type="scientific">Geobacter sulfurreducens (strain ATCC 51573 / DSM 12127 / PCA)</name>
    <dbReference type="NCBI Taxonomy" id="243231"/>
    <lineage>
        <taxon>Bacteria</taxon>
        <taxon>Pseudomonadati</taxon>
        <taxon>Thermodesulfobacteriota</taxon>
        <taxon>Desulfuromonadia</taxon>
        <taxon>Geobacterales</taxon>
        <taxon>Geobacteraceae</taxon>
        <taxon>Geobacter</taxon>
    </lineage>
</organism>
<feature type="chain" id="PRO_1000068491" description="Biosynthetic arginine decarboxylase">
    <location>
        <begin position="1"/>
        <end position="635"/>
    </location>
</feature>
<feature type="binding site" evidence="1">
    <location>
        <begin position="282"/>
        <end position="292"/>
    </location>
    <ligand>
        <name>substrate</name>
    </ligand>
</feature>
<feature type="modified residue" description="N6-(pyridoxal phosphate)lysine" evidence="1">
    <location>
        <position position="100"/>
    </location>
</feature>
<evidence type="ECO:0000255" key="1">
    <source>
        <dbReference type="HAMAP-Rule" id="MF_01417"/>
    </source>
</evidence>
<accession>A0A4W3</accession>
<sequence>MERWSINESAKIYNLPNWGADLFSINKKGNVCVHPSPTSKHSIDLRALVDDLIKRKIKPPILLRFMDVLQGRIASINRVFKNAIDENDYPATYQTFYPIKVNQQRQVVEAIAKFGKRYNIGLEVGSKPELVIGISFATGNGIPIICNGYKDTEYIETVLYATKIGYDITIVVEKMFELEKIIALSKKTGIKPKLGIRVKLSSKGTGKWATSGGEDAKFGLRMSEIIAAIGLLEQNDLLDRVKLLHFHIGSQITKIDKIKSALIEGTRIYAEMRKLGVGIRYVDIGGGLGVDYDGSKSSYFSSVNYSIEEYANDVIYQIKNICEDAGVECPNIISESGRATAAHYSVLVTNLLNTNTSNAMPDFEETLNGTEKLAPTVKKLVDIYKSIDRYSLREDYHDTVQLIQEAVSLFNLGYLTLNERAMAEWLHGKILRKINGIVEKIKPIPEELQNFQLSLRQTYFANFSLFQSIPDSWAIDQLFPIVPIQRLNQKPDVMASIADITCDSDGEITSFVGENGRTKYLPLHKMRKDEDYFVGFFLIGAYQEILGDMHNLFGDTNAVHVTFNKKTGYKIDTVIHGDATWESLKYVQYKGPEILKHVRDTLEKDVALRKVTIEESSHFLELLDRTLLGYTYLGE</sequence>
<keyword id="KW-0210">Decarboxylase</keyword>
<keyword id="KW-0456">Lyase</keyword>
<keyword id="KW-0460">Magnesium</keyword>
<keyword id="KW-0479">Metal-binding</keyword>
<keyword id="KW-0620">Polyamine biosynthesis</keyword>
<keyword id="KW-0663">Pyridoxal phosphate</keyword>
<keyword id="KW-1185">Reference proteome</keyword>
<keyword id="KW-0745">Spermidine biosynthesis</keyword>
<name>SPEA_GEOSL</name>
<proteinExistence type="inferred from homology"/>
<reference key="1">
    <citation type="journal article" date="2003" name="Science">
        <title>Genome of Geobacter sulfurreducens: metal reduction in subsurface environments.</title>
        <authorList>
            <person name="Methe B.A."/>
            <person name="Nelson K.E."/>
            <person name="Eisen J.A."/>
            <person name="Paulsen I.T."/>
            <person name="Nelson W.C."/>
            <person name="Heidelberg J.F."/>
            <person name="Wu D."/>
            <person name="Wu M."/>
            <person name="Ward N.L."/>
            <person name="Beanan M.J."/>
            <person name="Dodson R.J."/>
            <person name="Madupu R."/>
            <person name="Brinkac L.M."/>
            <person name="Daugherty S.C."/>
            <person name="DeBoy R.T."/>
            <person name="Durkin A.S."/>
            <person name="Gwinn M.L."/>
            <person name="Kolonay J.F."/>
            <person name="Sullivan S.A."/>
            <person name="Haft D.H."/>
            <person name="Selengut J."/>
            <person name="Davidsen T.M."/>
            <person name="Zafar N."/>
            <person name="White O."/>
            <person name="Tran B."/>
            <person name="Romero C."/>
            <person name="Forberger H.A."/>
            <person name="Weidman J.F."/>
            <person name="Khouri H.M."/>
            <person name="Feldblyum T.V."/>
            <person name="Utterback T.R."/>
            <person name="Van Aken S.E."/>
            <person name="Lovley D.R."/>
            <person name="Fraser C.M."/>
        </authorList>
    </citation>
    <scope>NUCLEOTIDE SEQUENCE [LARGE SCALE GENOMIC DNA]</scope>
    <source>
        <strain>ATCC 51573 / DSM 12127 / PCA</strain>
    </source>
</reference>
<comment type="function">
    <text evidence="1">Catalyzes the biosynthesis of agmatine from arginine.</text>
</comment>
<comment type="catalytic activity">
    <reaction evidence="1">
        <text>L-arginine + H(+) = agmatine + CO2</text>
        <dbReference type="Rhea" id="RHEA:17641"/>
        <dbReference type="ChEBI" id="CHEBI:15378"/>
        <dbReference type="ChEBI" id="CHEBI:16526"/>
        <dbReference type="ChEBI" id="CHEBI:32682"/>
        <dbReference type="ChEBI" id="CHEBI:58145"/>
        <dbReference type="EC" id="4.1.1.19"/>
    </reaction>
</comment>
<comment type="cofactor">
    <cofactor evidence="1">
        <name>Mg(2+)</name>
        <dbReference type="ChEBI" id="CHEBI:18420"/>
    </cofactor>
</comment>
<comment type="cofactor">
    <cofactor evidence="1">
        <name>pyridoxal 5'-phosphate</name>
        <dbReference type="ChEBI" id="CHEBI:597326"/>
    </cofactor>
</comment>
<comment type="pathway">
    <text evidence="1">Amine and polyamine biosynthesis; agmatine biosynthesis; agmatine from L-arginine: step 1/1.</text>
</comment>
<comment type="similarity">
    <text evidence="1">Belongs to the Orn/Lys/Arg decarboxylase class-II family. SpeA subfamily.</text>
</comment>
<protein>
    <recommendedName>
        <fullName evidence="1">Biosynthetic arginine decarboxylase</fullName>
        <shortName evidence="1">ADC</shortName>
        <ecNumber evidence="1">4.1.1.19</ecNumber>
    </recommendedName>
</protein>
<gene>
    <name evidence="1" type="primary">speA</name>
    <name type="ordered locus">GSU2537</name>
</gene>